<name>H2AV3_DICDI</name>
<comment type="function">
    <text evidence="1">Core component of nucleosome which plays a central role in DNA double strand break (DSB) repair. Nucleosomes wrap and compact DNA into chromatin, limiting DNA accessibility to the cellular machineries which require DNA as a template. Histones thereby play a central role in transcription regulation, DNA repair, DNA replication and chromosomal stability. DNA accessibility is regulated via a complex set of post-translational modifications of histones, also called histone code, and nucleosome remodeling (By similarity).</text>
</comment>
<comment type="subunit">
    <text evidence="1">The nucleosome is a histone octamer containing two molecules each of H2A, H2B, H3 and H4 assembled in one H3-H4 heterotetramer and two H2A-H2B heterodimers. The octamer wraps approximately 147 bp of DNA (By similarity).</text>
</comment>
<comment type="subcellular location">
    <subcellularLocation>
        <location evidence="1">Nucleus</location>
    </subcellularLocation>
    <subcellularLocation>
        <location evidence="1">Chromosome</location>
    </subcellularLocation>
</comment>
<comment type="similarity">
    <text evidence="2">Belongs to the histone H2A family.</text>
</comment>
<sequence length="125" mass="14881">MKRNNNLIIPLLKIKKLLKRKGCKRIQNSALVFFSKVLQYLIEELLEISMNVSILNKTKKYRIKPKDISWSIQSDPEFNLLFRNIIIPSSGRISNKLNRIIQRSFKFKSFKFDDYEKSDYSSKTF</sequence>
<proteinExistence type="inferred from homology"/>
<reference key="1">
    <citation type="journal article" date="2005" name="Nature">
        <title>The genome of the social amoeba Dictyostelium discoideum.</title>
        <authorList>
            <person name="Eichinger L."/>
            <person name="Pachebat J.A."/>
            <person name="Gloeckner G."/>
            <person name="Rajandream M.A."/>
            <person name="Sucgang R."/>
            <person name="Berriman M."/>
            <person name="Song J."/>
            <person name="Olsen R."/>
            <person name="Szafranski K."/>
            <person name="Xu Q."/>
            <person name="Tunggal B."/>
            <person name="Kummerfeld S."/>
            <person name="Madera M."/>
            <person name="Konfortov B.A."/>
            <person name="Rivero F."/>
            <person name="Bankier A.T."/>
            <person name="Lehmann R."/>
            <person name="Hamlin N."/>
            <person name="Davies R."/>
            <person name="Gaudet P."/>
            <person name="Fey P."/>
            <person name="Pilcher K."/>
            <person name="Chen G."/>
            <person name="Saunders D."/>
            <person name="Sodergren E.J."/>
            <person name="Davis P."/>
            <person name="Kerhornou A."/>
            <person name="Nie X."/>
            <person name="Hall N."/>
            <person name="Anjard C."/>
            <person name="Hemphill L."/>
            <person name="Bason N."/>
            <person name="Farbrother P."/>
            <person name="Desany B."/>
            <person name="Just E."/>
            <person name="Morio T."/>
            <person name="Rost R."/>
            <person name="Churcher C.M."/>
            <person name="Cooper J."/>
            <person name="Haydock S."/>
            <person name="van Driessche N."/>
            <person name="Cronin A."/>
            <person name="Goodhead I."/>
            <person name="Muzny D.M."/>
            <person name="Mourier T."/>
            <person name="Pain A."/>
            <person name="Lu M."/>
            <person name="Harper D."/>
            <person name="Lindsay R."/>
            <person name="Hauser H."/>
            <person name="James K.D."/>
            <person name="Quiles M."/>
            <person name="Madan Babu M."/>
            <person name="Saito T."/>
            <person name="Buchrieser C."/>
            <person name="Wardroper A."/>
            <person name="Felder M."/>
            <person name="Thangavelu M."/>
            <person name="Johnson D."/>
            <person name="Knights A."/>
            <person name="Loulseged H."/>
            <person name="Mungall K.L."/>
            <person name="Oliver K."/>
            <person name="Price C."/>
            <person name="Quail M.A."/>
            <person name="Urushihara H."/>
            <person name="Hernandez J."/>
            <person name="Rabbinowitsch E."/>
            <person name="Steffen D."/>
            <person name="Sanders M."/>
            <person name="Ma J."/>
            <person name="Kohara Y."/>
            <person name="Sharp S."/>
            <person name="Simmonds M.N."/>
            <person name="Spiegler S."/>
            <person name="Tivey A."/>
            <person name="Sugano S."/>
            <person name="White B."/>
            <person name="Walker D."/>
            <person name="Woodward J.R."/>
            <person name="Winckler T."/>
            <person name="Tanaka Y."/>
            <person name="Shaulsky G."/>
            <person name="Schleicher M."/>
            <person name="Weinstock G.M."/>
            <person name="Rosenthal A."/>
            <person name="Cox E.C."/>
            <person name="Chisholm R.L."/>
            <person name="Gibbs R.A."/>
            <person name="Loomis W.F."/>
            <person name="Platzer M."/>
            <person name="Kay R.R."/>
            <person name="Williams J.G."/>
            <person name="Dear P.H."/>
            <person name="Noegel A.A."/>
            <person name="Barrell B.G."/>
            <person name="Kuspa A."/>
        </authorList>
    </citation>
    <scope>NUCLEOTIDE SEQUENCE [LARGE SCALE GENOMIC DNA]</scope>
    <source>
        <strain>AX4</strain>
    </source>
</reference>
<accession>Q54HV7</accession>
<gene>
    <name type="primary">H2Av3</name>
    <name type="ORF">DDB_G0289197</name>
</gene>
<evidence type="ECO:0000250" key="1"/>
<evidence type="ECO:0000305" key="2"/>
<dbReference type="EMBL" id="AAFI02000131">
    <property type="protein sequence ID" value="EAL62832.1"/>
    <property type="molecule type" value="Genomic_DNA"/>
</dbReference>
<dbReference type="RefSeq" id="XP_636332.1">
    <property type="nucleotide sequence ID" value="XM_631240.1"/>
</dbReference>
<dbReference type="SMR" id="Q54HV7"/>
<dbReference type="STRING" id="44689.Q54HV7"/>
<dbReference type="PaxDb" id="44689-DDB0232115"/>
<dbReference type="EnsemblProtists" id="EAL62832">
    <property type="protein sequence ID" value="EAL62832"/>
    <property type="gene ID" value="DDB_G0289197"/>
</dbReference>
<dbReference type="GeneID" id="8627005"/>
<dbReference type="KEGG" id="ddi:DDB_G0289197"/>
<dbReference type="dictyBase" id="DDB_G0289197">
    <property type="gene designation" value="H2Av3"/>
</dbReference>
<dbReference type="VEuPathDB" id="AmoebaDB:DDB_G0289197"/>
<dbReference type="eggNOG" id="KOG1756">
    <property type="taxonomic scope" value="Eukaryota"/>
</dbReference>
<dbReference type="HOGENOM" id="CLU_1996869_0_0_1"/>
<dbReference type="InParanoid" id="Q54HV7"/>
<dbReference type="PhylomeDB" id="Q54HV7"/>
<dbReference type="Reactome" id="R-DDI-2299718">
    <property type="pathway name" value="Condensation of Prophase Chromosomes"/>
</dbReference>
<dbReference type="Reactome" id="R-DDI-2559580">
    <property type="pathway name" value="Oxidative Stress Induced Senescence"/>
</dbReference>
<dbReference type="Reactome" id="R-DDI-3214815">
    <property type="pathway name" value="HDACs deacetylate histones"/>
</dbReference>
<dbReference type="Reactome" id="R-DDI-3214858">
    <property type="pathway name" value="RMTs methylate histone arginines"/>
</dbReference>
<dbReference type="Reactome" id="R-DDI-427359">
    <property type="pathway name" value="SIRT1 negatively regulates rRNA expression"/>
</dbReference>
<dbReference type="Reactome" id="R-DDI-5625886">
    <property type="pathway name" value="Activated PKN1 stimulates transcription of AR (androgen receptor) regulated genes KLK2 and KLK3"/>
</dbReference>
<dbReference type="Reactome" id="R-DDI-5689880">
    <property type="pathway name" value="Ub-specific processing proteases"/>
</dbReference>
<dbReference type="Reactome" id="R-DDI-5689901">
    <property type="pathway name" value="Metalloprotease DUBs"/>
</dbReference>
<dbReference type="Reactome" id="R-DDI-5693565">
    <property type="pathway name" value="Recruitment and ATM-mediated phosphorylation of repair and signaling proteins at DNA double strand breaks"/>
</dbReference>
<dbReference type="Reactome" id="R-DDI-68616">
    <property type="pathway name" value="Assembly of the ORC complex at the origin of replication"/>
</dbReference>
<dbReference type="Reactome" id="R-DDI-73772">
    <property type="pathway name" value="RNA Polymerase I Promoter Escape"/>
</dbReference>
<dbReference type="Reactome" id="R-DDI-9843940">
    <property type="pathway name" value="Regulation of endogenous retroelements by KRAB-ZFP proteins"/>
</dbReference>
<dbReference type="PRO" id="PR:Q54HV7"/>
<dbReference type="Proteomes" id="UP000002195">
    <property type="component" value="Chromosome 5"/>
</dbReference>
<dbReference type="GO" id="GO:0000786">
    <property type="term" value="C:nucleosome"/>
    <property type="evidence" value="ECO:0000318"/>
    <property type="project" value="GO_Central"/>
</dbReference>
<dbReference type="GO" id="GO:0005634">
    <property type="term" value="C:nucleus"/>
    <property type="evidence" value="ECO:0000318"/>
    <property type="project" value="GO_Central"/>
</dbReference>
<dbReference type="GO" id="GO:0003677">
    <property type="term" value="F:DNA binding"/>
    <property type="evidence" value="ECO:0007669"/>
    <property type="project" value="UniProtKB-KW"/>
</dbReference>
<dbReference type="GO" id="GO:0046982">
    <property type="term" value="F:protein heterodimerization activity"/>
    <property type="evidence" value="ECO:0007669"/>
    <property type="project" value="InterPro"/>
</dbReference>
<dbReference type="GO" id="GO:0030527">
    <property type="term" value="F:structural constituent of chromatin"/>
    <property type="evidence" value="ECO:0000318"/>
    <property type="project" value="GO_Central"/>
</dbReference>
<dbReference type="GO" id="GO:0048870">
    <property type="term" value="P:cell motility"/>
    <property type="evidence" value="ECO:0000316"/>
    <property type="project" value="dictyBase"/>
</dbReference>
<dbReference type="GO" id="GO:0031507">
    <property type="term" value="P:heterochromatin formation"/>
    <property type="evidence" value="ECO:0000318"/>
    <property type="project" value="GO_Central"/>
</dbReference>
<dbReference type="Gene3D" id="1.10.20.10">
    <property type="entry name" value="Histone, subunit A"/>
    <property type="match status" value="1"/>
</dbReference>
<dbReference type="InterPro" id="IPR009072">
    <property type="entry name" value="Histone-fold"/>
</dbReference>
<dbReference type="InterPro" id="IPR002119">
    <property type="entry name" value="Histone_H2A"/>
</dbReference>
<dbReference type="InterPro" id="IPR007125">
    <property type="entry name" value="Histone_H2A/H2B/H3"/>
</dbReference>
<dbReference type="PANTHER" id="PTHR23430">
    <property type="entry name" value="HISTONE H2A"/>
    <property type="match status" value="1"/>
</dbReference>
<dbReference type="Pfam" id="PF00125">
    <property type="entry name" value="Histone"/>
    <property type="match status" value="1"/>
</dbReference>
<dbReference type="SUPFAM" id="SSF47113">
    <property type="entry name" value="Histone-fold"/>
    <property type="match status" value="1"/>
</dbReference>
<protein>
    <recommendedName>
        <fullName>Histone H2A.v3</fullName>
    </recommendedName>
</protein>
<keyword id="KW-0158">Chromosome</keyword>
<keyword id="KW-0238">DNA-binding</keyword>
<keyword id="KW-0544">Nucleosome core</keyword>
<keyword id="KW-0539">Nucleus</keyword>
<keyword id="KW-1185">Reference proteome</keyword>
<organism>
    <name type="scientific">Dictyostelium discoideum</name>
    <name type="common">Social amoeba</name>
    <dbReference type="NCBI Taxonomy" id="44689"/>
    <lineage>
        <taxon>Eukaryota</taxon>
        <taxon>Amoebozoa</taxon>
        <taxon>Evosea</taxon>
        <taxon>Eumycetozoa</taxon>
        <taxon>Dictyostelia</taxon>
        <taxon>Dictyosteliales</taxon>
        <taxon>Dictyosteliaceae</taxon>
        <taxon>Dictyostelium</taxon>
    </lineage>
</organism>
<feature type="initiator methionine" description="Removed" evidence="2">
    <location>
        <position position="1"/>
    </location>
</feature>
<feature type="chain" id="PRO_0000389157" description="Histone H2A.v3">
    <location>
        <begin position="2"/>
        <end position="125"/>
    </location>
</feature>